<proteinExistence type="evidence at protein level"/>
<feature type="chain" id="PRO_0000116715" description="Meiotically up-regulated gene 153 protein">
    <location>
        <begin position="1"/>
        <end position="109"/>
    </location>
</feature>
<sequence length="109" mass="12227">MGSPSLTKTINASLSLHSITQPITLLKTMHYVLQLTILPSAMQHYATLRNFTHPACSVNKQAEQGKEQQQYAMKSQFQFRSGICSKVRSDELGFKGNSLQLNDLPKNPY</sequence>
<comment type="function">
    <text evidence="1">Has a role in meiosis.</text>
</comment>
<comment type="subcellular location">
    <subcellularLocation>
        <location evidence="2">Mitochondrion</location>
    </subcellularLocation>
</comment>
<accession>Q9C0U3</accession>
<dbReference type="EMBL" id="CU329670">
    <property type="protein sequence ID" value="CAC34972.1"/>
    <property type="molecule type" value="Genomic_DNA"/>
</dbReference>
<dbReference type="RefSeq" id="NP_593961.1">
    <property type="nucleotide sequence ID" value="NM_001019388.2"/>
</dbReference>
<dbReference type="SMR" id="Q9C0U3"/>
<dbReference type="STRING" id="284812.Q9C0U3"/>
<dbReference type="iPTMnet" id="Q9C0U3"/>
<dbReference type="PaxDb" id="4896-SPACUNK4.19.1"/>
<dbReference type="EnsemblFungi" id="SPACUNK4.19.1">
    <property type="protein sequence ID" value="SPACUNK4.19.1:pep"/>
    <property type="gene ID" value="SPACUNK4.19"/>
</dbReference>
<dbReference type="GeneID" id="2542261"/>
<dbReference type="KEGG" id="spo:2542261"/>
<dbReference type="PomBase" id="SPACUNK4.19">
    <property type="gene designation" value="mug153"/>
</dbReference>
<dbReference type="VEuPathDB" id="FungiDB:SPACUNK4.19"/>
<dbReference type="HOGENOM" id="CLU_2185476_0_0_1"/>
<dbReference type="InParanoid" id="Q9C0U3"/>
<dbReference type="PRO" id="PR:Q9C0U3"/>
<dbReference type="Proteomes" id="UP000002485">
    <property type="component" value="Chromosome I"/>
</dbReference>
<dbReference type="GO" id="GO:0005739">
    <property type="term" value="C:mitochondrion"/>
    <property type="evidence" value="ECO:0007005"/>
    <property type="project" value="PomBase"/>
</dbReference>
<dbReference type="GO" id="GO:0051321">
    <property type="term" value="P:meiotic cell cycle"/>
    <property type="evidence" value="ECO:0007669"/>
    <property type="project" value="UniProtKB-KW"/>
</dbReference>
<organism>
    <name type="scientific">Schizosaccharomyces pombe (strain 972 / ATCC 24843)</name>
    <name type="common">Fission yeast</name>
    <dbReference type="NCBI Taxonomy" id="284812"/>
    <lineage>
        <taxon>Eukaryota</taxon>
        <taxon>Fungi</taxon>
        <taxon>Dikarya</taxon>
        <taxon>Ascomycota</taxon>
        <taxon>Taphrinomycotina</taxon>
        <taxon>Schizosaccharomycetes</taxon>
        <taxon>Schizosaccharomycetales</taxon>
        <taxon>Schizosaccharomycetaceae</taxon>
        <taxon>Schizosaccharomyces</taxon>
    </lineage>
</organism>
<evidence type="ECO:0000269" key="1">
    <source>
    </source>
</evidence>
<evidence type="ECO:0000269" key="2">
    <source>
    </source>
</evidence>
<protein>
    <recommendedName>
        <fullName>Meiotically up-regulated gene 153 protein</fullName>
    </recommendedName>
</protein>
<reference key="1">
    <citation type="journal article" date="2002" name="Nature">
        <title>The genome sequence of Schizosaccharomyces pombe.</title>
        <authorList>
            <person name="Wood V."/>
            <person name="Gwilliam R."/>
            <person name="Rajandream M.A."/>
            <person name="Lyne M.H."/>
            <person name="Lyne R."/>
            <person name="Stewart A."/>
            <person name="Sgouros J.G."/>
            <person name="Peat N."/>
            <person name="Hayles J."/>
            <person name="Baker S.G."/>
            <person name="Basham D."/>
            <person name="Bowman S."/>
            <person name="Brooks K."/>
            <person name="Brown D."/>
            <person name="Brown S."/>
            <person name="Chillingworth T."/>
            <person name="Churcher C.M."/>
            <person name="Collins M."/>
            <person name="Connor R."/>
            <person name="Cronin A."/>
            <person name="Davis P."/>
            <person name="Feltwell T."/>
            <person name="Fraser A."/>
            <person name="Gentles S."/>
            <person name="Goble A."/>
            <person name="Hamlin N."/>
            <person name="Harris D.E."/>
            <person name="Hidalgo J."/>
            <person name="Hodgson G."/>
            <person name="Holroyd S."/>
            <person name="Hornsby T."/>
            <person name="Howarth S."/>
            <person name="Huckle E.J."/>
            <person name="Hunt S."/>
            <person name="Jagels K."/>
            <person name="James K.D."/>
            <person name="Jones L."/>
            <person name="Jones M."/>
            <person name="Leather S."/>
            <person name="McDonald S."/>
            <person name="McLean J."/>
            <person name="Mooney P."/>
            <person name="Moule S."/>
            <person name="Mungall K.L."/>
            <person name="Murphy L.D."/>
            <person name="Niblett D."/>
            <person name="Odell C."/>
            <person name="Oliver K."/>
            <person name="O'Neil S."/>
            <person name="Pearson D."/>
            <person name="Quail M.A."/>
            <person name="Rabbinowitsch E."/>
            <person name="Rutherford K.M."/>
            <person name="Rutter S."/>
            <person name="Saunders D."/>
            <person name="Seeger K."/>
            <person name="Sharp S."/>
            <person name="Skelton J."/>
            <person name="Simmonds M.N."/>
            <person name="Squares R."/>
            <person name="Squares S."/>
            <person name="Stevens K."/>
            <person name="Taylor K."/>
            <person name="Taylor R.G."/>
            <person name="Tivey A."/>
            <person name="Walsh S.V."/>
            <person name="Warren T."/>
            <person name="Whitehead S."/>
            <person name="Woodward J.R."/>
            <person name="Volckaert G."/>
            <person name="Aert R."/>
            <person name="Robben J."/>
            <person name="Grymonprez B."/>
            <person name="Weltjens I."/>
            <person name="Vanstreels E."/>
            <person name="Rieger M."/>
            <person name="Schaefer M."/>
            <person name="Mueller-Auer S."/>
            <person name="Gabel C."/>
            <person name="Fuchs M."/>
            <person name="Duesterhoeft A."/>
            <person name="Fritzc C."/>
            <person name="Holzer E."/>
            <person name="Moestl D."/>
            <person name="Hilbert H."/>
            <person name="Borzym K."/>
            <person name="Langer I."/>
            <person name="Beck A."/>
            <person name="Lehrach H."/>
            <person name="Reinhardt R."/>
            <person name="Pohl T.M."/>
            <person name="Eger P."/>
            <person name="Zimmermann W."/>
            <person name="Wedler H."/>
            <person name="Wambutt R."/>
            <person name="Purnelle B."/>
            <person name="Goffeau A."/>
            <person name="Cadieu E."/>
            <person name="Dreano S."/>
            <person name="Gloux S."/>
            <person name="Lelaure V."/>
            <person name="Mottier S."/>
            <person name="Galibert F."/>
            <person name="Aves S.J."/>
            <person name="Xiang Z."/>
            <person name="Hunt C."/>
            <person name="Moore K."/>
            <person name="Hurst S.M."/>
            <person name="Lucas M."/>
            <person name="Rochet M."/>
            <person name="Gaillardin C."/>
            <person name="Tallada V.A."/>
            <person name="Garzon A."/>
            <person name="Thode G."/>
            <person name="Daga R.R."/>
            <person name="Cruzado L."/>
            <person name="Jimenez J."/>
            <person name="Sanchez M."/>
            <person name="del Rey F."/>
            <person name="Benito J."/>
            <person name="Dominguez A."/>
            <person name="Revuelta J.L."/>
            <person name="Moreno S."/>
            <person name="Armstrong J."/>
            <person name="Forsburg S.L."/>
            <person name="Cerutti L."/>
            <person name="Lowe T."/>
            <person name="McCombie W.R."/>
            <person name="Paulsen I."/>
            <person name="Potashkin J."/>
            <person name="Shpakovski G.V."/>
            <person name="Ussery D."/>
            <person name="Barrell B.G."/>
            <person name="Nurse P."/>
        </authorList>
    </citation>
    <scope>NUCLEOTIDE SEQUENCE [LARGE SCALE GENOMIC DNA]</scope>
    <source>
        <strain>972 / ATCC 24843</strain>
    </source>
</reference>
<reference key="2">
    <citation type="journal article" date="2005" name="Curr. Biol.">
        <title>A large-scale screen in S. pombe identifies seven novel genes required for critical meiotic events.</title>
        <authorList>
            <person name="Martin-Castellanos C."/>
            <person name="Blanco M."/>
            <person name="Rozalen A.E."/>
            <person name="Perez-Hidalgo L."/>
            <person name="Garcia A.I."/>
            <person name="Conde F."/>
            <person name="Mata J."/>
            <person name="Ellermeier C."/>
            <person name="Davis L."/>
            <person name="San-Segundo P."/>
            <person name="Smith G.R."/>
            <person name="Moreno S."/>
        </authorList>
    </citation>
    <scope>FUNCTION IN MEIOSIS</scope>
</reference>
<reference key="3">
    <citation type="journal article" date="2006" name="Nat. Biotechnol.">
        <title>ORFeome cloning and global analysis of protein localization in the fission yeast Schizosaccharomyces pombe.</title>
        <authorList>
            <person name="Matsuyama A."/>
            <person name="Arai R."/>
            <person name="Yashiroda Y."/>
            <person name="Shirai A."/>
            <person name="Kamata A."/>
            <person name="Sekido S."/>
            <person name="Kobayashi Y."/>
            <person name="Hashimoto A."/>
            <person name="Hamamoto M."/>
            <person name="Hiraoka Y."/>
            <person name="Horinouchi S."/>
            <person name="Yoshida M."/>
        </authorList>
    </citation>
    <scope>SUBCELLULAR LOCATION [LARGE SCALE ANALYSIS]</scope>
</reference>
<gene>
    <name type="primary">mug153</name>
    <name type="ORF">SPACUNK4.19</name>
</gene>
<keyword id="KW-0469">Meiosis</keyword>
<keyword id="KW-0496">Mitochondrion</keyword>
<keyword id="KW-1185">Reference proteome</keyword>
<name>MU153_SCHPO</name>